<name>Y1706_METFK</name>
<comment type="function">
    <text evidence="1">Nucleotide-binding protein.</text>
</comment>
<comment type="similarity">
    <text evidence="1">Belongs to the YajQ family.</text>
</comment>
<organism>
    <name type="scientific">Methylobacillus flagellatus (strain ATCC 51484 / DSM 6875 / VKM B-1610 / KT)</name>
    <dbReference type="NCBI Taxonomy" id="265072"/>
    <lineage>
        <taxon>Bacteria</taxon>
        <taxon>Pseudomonadati</taxon>
        <taxon>Pseudomonadota</taxon>
        <taxon>Betaproteobacteria</taxon>
        <taxon>Nitrosomonadales</taxon>
        <taxon>Methylophilaceae</taxon>
        <taxon>Methylobacillus</taxon>
    </lineage>
</organism>
<proteinExistence type="inferred from homology"/>
<dbReference type="EMBL" id="CP000284">
    <property type="protein sequence ID" value="ABE49974.1"/>
    <property type="molecule type" value="Genomic_DNA"/>
</dbReference>
<dbReference type="RefSeq" id="WP_011479928.1">
    <property type="nucleotide sequence ID" value="NC_007947.1"/>
</dbReference>
<dbReference type="SMR" id="Q1H0L3"/>
<dbReference type="STRING" id="265072.Mfla_1706"/>
<dbReference type="KEGG" id="mfa:Mfla_1706"/>
<dbReference type="eggNOG" id="COG1666">
    <property type="taxonomic scope" value="Bacteria"/>
</dbReference>
<dbReference type="HOGENOM" id="CLU_099839_1_0_4"/>
<dbReference type="OrthoDB" id="9801447at2"/>
<dbReference type="Proteomes" id="UP000002440">
    <property type="component" value="Chromosome"/>
</dbReference>
<dbReference type="GO" id="GO:0005829">
    <property type="term" value="C:cytosol"/>
    <property type="evidence" value="ECO:0007669"/>
    <property type="project" value="TreeGrafter"/>
</dbReference>
<dbReference type="GO" id="GO:0000166">
    <property type="term" value="F:nucleotide binding"/>
    <property type="evidence" value="ECO:0007669"/>
    <property type="project" value="TreeGrafter"/>
</dbReference>
<dbReference type="CDD" id="cd11740">
    <property type="entry name" value="YajQ_like"/>
    <property type="match status" value="1"/>
</dbReference>
<dbReference type="Gene3D" id="3.30.70.860">
    <property type="match status" value="1"/>
</dbReference>
<dbReference type="Gene3D" id="3.30.70.990">
    <property type="entry name" value="YajQ-like, domain 2"/>
    <property type="match status" value="1"/>
</dbReference>
<dbReference type="HAMAP" id="MF_00632">
    <property type="entry name" value="YajQ"/>
    <property type="match status" value="1"/>
</dbReference>
<dbReference type="InterPro" id="IPR007551">
    <property type="entry name" value="DUF520"/>
</dbReference>
<dbReference type="InterPro" id="IPR035571">
    <property type="entry name" value="UPF0234-like_C"/>
</dbReference>
<dbReference type="InterPro" id="IPR035570">
    <property type="entry name" value="UPF0234_N"/>
</dbReference>
<dbReference type="InterPro" id="IPR036183">
    <property type="entry name" value="YajQ-like_sf"/>
</dbReference>
<dbReference type="NCBIfam" id="NF003819">
    <property type="entry name" value="PRK05412.1"/>
    <property type="match status" value="1"/>
</dbReference>
<dbReference type="PANTHER" id="PTHR30476">
    <property type="entry name" value="UPF0234 PROTEIN YAJQ"/>
    <property type="match status" value="1"/>
</dbReference>
<dbReference type="PANTHER" id="PTHR30476:SF0">
    <property type="entry name" value="UPF0234 PROTEIN YAJQ"/>
    <property type="match status" value="1"/>
</dbReference>
<dbReference type="Pfam" id="PF04461">
    <property type="entry name" value="DUF520"/>
    <property type="match status" value="1"/>
</dbReference>
<dbReference type="SUPFAM" id="SSF89963">
    <property type="entry name" value="YajQ-like"/>
    <property type="match status" value="2"/>
</dbReference>
<evidence type="ECO:0000255" key="1">
    <source>
        <dbReference type="HAMAP-Rule" id="MF_00632"/>
    </source>
</evidence>
<accession>Q1H0L3</accession>
<protein>
    <recommendedName>
        <fullName evidence="1">Nucleotide-binding protein Mfla_1706</fullName>
    </recommendedName>
</protein>
<reference key="1">
    <citation type="submission" date="2006-03" db="EMBL/GenBank/DDBJ databases">
        <title>Complete sequence of Methylobacillus flagellatus KT.</title>
        <authorList>
            <consortium name="US DOE Joint Genome Institute"/>
            <person name="Copeland A."/>
            <person name="Lucas S."/>
            <person name="Lapidus A."/>
            <person name="Barry K."/>
            <person name="Detter J.C."/>
            <person name="Glavina del Rio T."/>
            <person name="Hammon N."/>
            <person name="Israni S."/>
            <person name="Dalin E."/>
            <person name="Tice H."/>
            <person name="Pitluck S."/>
            <person name="Brettin T."/>
            <person name="Bruce D."/>
            <person name="Han C."/>
            <person name="Tapia R."/>
            <person name="Saunders E."/>
            <person name="Gilna P."/>
            <person name="Schmutz J."/>
            <person name="Larimer F."/>
            <person name="Land M."/>
            <person name="Kyrpides N."/>
            <person name="Anderson I."/>
            <person name="Richardson P."/>
        </authorList>
    </citation>
    <scope>NUCLEOTIDE SEQUENCE [LARGE SCALE GENOMIC DNA]</scope>
    <source>
        <strain>ATCC 51484 / DSM 6875 / VKM B-1610 / KT</strain>
    </source>
</reference>
<gene>
    <name type="ordered locus">Mfla_1706</name>
</gene>
<feature type="chain" id="PRO_0000261949" description="Nucleotide-binding protein Mfla_1706">
    <location>
        <begin position="1"/>
        <end position="164"/>
    </location>
</feature>
<keyword id="KW-0547">Nucleotide-binding</keyword>
<keyword id="KW-1185">Reference proteome</keyword>
<sequence length="164" mass="18124">MPSFDISSEVDMVALKNAVDVAGRQIANRYDFKGTSASIELNEKDGLITLHGDSDFQLDQIKAILLPAMEKKEADSAKRLDHQDVQKISGNKVKQVLKIKAGIDAELAKKIVRLLKDSGLKVQASIQGDEVRVTGAKRDVLQEVIAFVRKSITDFPLQFGNFRD</sequence>